<sequence>MANLGSEAEREPLLGPGSPGSREWSEIETQEHYKSRWKSVRILYLTMFLSSVGFSIVIMSIWPYLQKIDQTADASFLGWVIASYSLGQMVASPLFGLWSNYRPRKEPLIVSISISVAANCLYAYVHVPAAHNKYYMLIARGLVGFGAGNVAVVRSYIAGATSLQERTNAMANTSTCQALGFILGPVFQTCFALIGEKGVTWDIIKLQVNMYTAPVLLAAFLGILNIILILFILREHRVDDLGRQCKSVNFQEENTDEPQIPEGSIDQVAVVATNIVFFVVLFIFAVYETILTPLTLDMYAWTQEQAVLYDGILLVAFGVEAVLVFMGVKLLSKKIGERAILLGGFVVVWVGFFILLPWGNQFPKIQWEDLHNSSTPNTTFGEIIIGLWNSSREDHSEQPTGCPIEQTWCLYTPVIHLAQFLTAAVLIGTGYPACSVMSYTLYSKVLGPKPQGIYMGWLTTSGSAARILGPVFISHVYTYLGPRWAFSLVCGIVVLTILLIGAVYKRLVAFSVRYMRIQE</sequence>
<feature type="chain" id="PRO_0000311233" description="Major facilitator superfamily domain-containing protein 8">
    <location>
        <begin position="1"/>
        <end position="519"/>
    </location>
</feature>
<feature type="topological domain" description="Cytoplasmic" evidence="2">
    <location>
        <begin position="1"/>
        <end position="41"/>
    </location>
</feature>
<feature type="transmembrane region" description="Helical" evidence="2">
    <location>
        <begin position="42"/>
        <end position="62"/>
    </location>
</feature>
<feature type="topological domain" description="Extracellular" evidence="2">
    <location>
        <begin position="63"/>
        <end position="75"/>
    </location>
</feature>
<feature type="transmembrane region" description="Helical" evidence="2">
    <location>
        <begin position="76"/>
        <end position="96"/>
    </location>
</feature>
<feature type="topological domain" description="Cytoplasmic" evidence="2">
    <location>
        <begin position="97"/>
        <end position="106"/>
    </location>
</feature>
<feature type="transmembrane region" description="Helical" evidence="2">
    <location>
        <begin position="107"/>
        <end position="127"/>
    </location>
</feature>
<feature type="topological domain" description="Extracellular" evidence="2">
    <location>
        <begin position="128"/>
        <end position="140"/>
    </location>
</feature>
<feature type="transmembrane region" description="Helical" evidence="2">
    <location>
        <begin position="141"/>
        <end position="161"/>
    </location>
</feature>
<feature type="topological domain" description="Cytoplasmic" evidence="2">
    <location>
        <begin position="162"/>
        <end position="174"/>
    </location>
</feature>
<feature type="transmembrane region" description="Helical" evidence="2">
    <location>
        <begin position="175"/>
        <end position="195"/>
    </location>
</feature>
<feature type="topological domain" description="Extracellular" evidence="2">
    <location>
        <begin position="196"/>
        <end position="212"/>
    </location>
</feature>
<feature type="transmembrane region" description="Helical" evidence="2">
    <location>
        <begin position="213"/>
        <end position="233"/>
    </location>
</feature>
<feature type="topological domain" description="Cytoplasmic" evidence="2">
    <location>
        <begin position="234"/>
        <end position="267"/>
    </location>
</feature>
<feature type="transmembrane region" description="Helical" evidence="2">
    <location>
        <begin position="268"/>
        <end position="288"/>
    </location>
</feature>
<feature type="topological domain" description="Extracellular" evidence="2">
    <location>
        <begin position="289"/>
        <end position="310"/>
    </location>
</feature>
<feature type="transmembrane region" description="Helical" evidence="2">
    <location>
        <begin position="311"/>
        <end position="331"/>
    </location>
</feature>
<feature type="topological domain" description="Cytoplasmic" evidence="2">
    <location>
        <begin position="332"/>
        <end position="338"/>
    </location>
</feature>
<feature type="transmembrane region" description="Helical" evidence="2">
    <location>
        <begin position="339"/>
        <end position="359"/>
    </location>
</feature>
<feature type="topological domain" description="Extracellular" evidence="2">
    <location>
        <begin position="360"/>
        <end position="416"/>
    </location>
</feature>
<feature type="transmembrane region" description="Helical" evidence="2">
    <location>
        <begin position="417"/>
        <end position="439"/>
    </location>
</feature>
<feature type="topological domain" description="Cytoplasmic" evidence="2">
    <location>
        <begin position="440"/>
        <end position="452"/>
    </location>
</feature>
<feature type="transmembrane region" description="Helical" evidence="2">
    <location>
        <begin position="453"/>
        <end position="473"/>
    </location>
</feature>
<feature type="topological domain" description="Extracellular" evidence="2">
    <location>
        <begin position="474"/>
        <end position="483"/>
    </location>
</feature>
<feature type="transmembrane region" description="Helical" evidence="2">
    <location>
        <begin position="484"/>
        <end position="504"/>
    </location>
</feature>
<feature type="topological domain" description="Cytoplasmic" evidence="2">
    <location>
        <begin position="505"/>
        <end position="519"/>
    </location>
</feature>
<feature type="region of interest" description="Disordered" evidence="3">
    <location>
        <begin position="1"/>
        <end position="25"/>
    </location>
</feature>
<feature type="short sequence motif" description="Dileucine internalization motif" evidence="1">
    <location>
        <begin position="13"/>
        <end position="14"/>
    </location>
</feature>
<feature type="glycosylation site" description="N-linked (GlcNAc...) asparagine" evidence="2">
    <location>
        <position position="372"/>
    </location>
</feature>
<feature type="glycosylation site" description="N-linked (GlcNAc...) asparagine" evidence="2">
    <location>
        <position position="377"/>
    </location>
</feature>
<feature type="sequence conflict" description="In Ref. 2; AAH10483." evidence="5" ref="2">
    <original>S</original>
    <variation>G</variation>
    <location>
        <position position="25"/>
    </location>
</feature>
<feature type="sequence conflict" description="In Ref. 1; BAB28676." evidence="5" ref="1">
    <original>S</original>
    <variation>F</variation>
    <location>
        <position position="39"/>
    </location>
</feature>
<feature type="sequence conflict" description="In Ref. 1; BAB28676." evidence="5" ref="1">
    <original>S</original>
    <variation>N</variation>
    <location>
        <position position="50"/>
    </location>
</feature>
<feature type="sequence conflict" description="In Ref. 1; BAB28676." evidence="5" ref="1">
    <original>V</original>
    <variation>G</variation>
    <location>
        <position position="116"/>
    </location>
</feature>
<feature type="sequence conflict" description="In Ref. 1; BAB28676." evidence="5" ref="1">
    <original>A</original>
    <variation>T</variation>
    <location>
        <position position="129"/>
    </location>
</feature>
<feature type="sequence conflict" description="In Ref. 2; AAH10483." evidence="5" ref="2">
    <original>L</original>
    <variation>F</variation>
    <location>
        <position position="313"/>
    </location>
</feature>
<feature type="sequence conflict" description="In Ref. 2; AAH10483." evidence="5" ref="2">
    <original>S</original>
    <variation>P</variation>
    <location>
        <position position="391"/>
    </location>
</feature>
<proteinExistence type="evidence at transcript level"/>
<comment type="function">
    <text evidence="1 4">Outward-rectifying chloride channel involved in endolysosomal chloride homeostasis, membrane fusion and function. Conducts chloride currents up to hundreds of picoamperes. Regulates lysosomal calcium content by reducing the lysosomal membrane potential, thereby activating TRPML1 channel and further release of lysosomal calcium ions. Regulates the pH in endolysosomal compartments and may contribute to progressive acidification from endosome to lysosome. Permeable to other halides such as iodide and fluoride ions.</text>
</comment>
<comment type="catalytic activity">
    <reaction evidence="4">
        <text>chloride(in) = chloride(out)</text>
        <dbReference type="Rhea" id="RHEA:29823"/>
        <dbReference type="ChEBI" id="CHEBI:17996"/>
    </reaction>
    <physiologicalReaction direction="right-to-left" evidence="6">
        <dbReference type="Rhea" id="RHEA:29825"/>
    </physiologicalReaction>
</comment>
<comment type="catalytic activity">
    <reaction evidence="1">
        <text>iodide(out) = iodide(in)</text>
        <dbReference type="Rhea" id="RHEA:66324"/>
        <dbReference type="ChEBI" id="CHEBI:16382"/>
    </reaction>
    <physiologicalReaction direction="left-to-right" evidence="1">
        <dbReference type="Rhea" id="RHEA:66325"/>
    </physiologicalReaction>
</comment>
<comment type="catalytic activity">
    <reaction evidence="1">
        <text>fluoride(in) = fluoride(out)</text>
        <dbReference type="Rhea" id="RHEA:76159"/>
        <dbReference type="ChEBI" id="CHEBI:17051"/>
    </reaction>
    <physiologicalReaction direction="right-to-left" evidence="1">
        <dbReference type="Rhea" id="RHEA:76161"/>
    </physiologicalReaction>
</comment>
<comment type="subcellular location">
    <subcellularLocation>
        <location evidence="1">Endosome membrane</location>
        <topology evidence="2">Multi-pass membrane protein</topology>
    </subcellularLocation>
    <subcellularLocation>
        <location evidence="1">Lysosome membrane</location>
        <topology evidence="2">Multi-pass membrane protein</topology>
    </subcellularLocation>
    <text evidence="1">Sorting to lysosomes involves dileucine-based motif.</text>
</comment>
<comment type="disruption phenotype">
    <text evidence="4">Retinal degeneration associated with blindness.</text>
</comment>
<comment type="similarity">
    <text evidence="5">Belongs to the major facilitator superfamily.</text>
</comment>
<organism>
    <name type="scientific">Mus musculus</name>
    <name type="common">Mouse</name>
    <dbReference type="NCBI Taxonomy" id="10090"/>
    <lineage>
        <taxon>Eukaryota</taxon>
        <taxon>Metazoa</taxon>
        <taxon>Chordata</taxon>
        <taxon>Craniata</taxon>
        <taxon>Vertebrata</taxon>
        <taxon>Euteleostomi</taxon>
        <taxon>Mammalia</taxon>
        <taxon>Eutheria</taxon>
        <taxon>Euarchontoglires</taxon>
        <taxon>Glires</taxon>
        <taxon>Rodentia</taxon>
        <taxon>Myomorpha</taxon>
        <taxon>Muroidea</taxon>
        <taxon>Muridae</taxon>
        <taxon>Murinae</taxon>
        <taxon>Mus</taxon>
        <taxon>Mus</taxon>
    </lineage>
</organism>
<name>MFSD8_MOUSE</name>
<keyword id="KW-0868">Chloride</keyword>
<keyword id="KW-0869">Chloride channel</keyword>
<keyword id="KW-0967">Endosome</keyword>
<keyword id="KW-0325">Glycoprotein</keyword>
<keyword id="KW-0407">Ion channel</keyword>
<keyword id="KW-0406">Ion transport</keyword>
<keyword id="KW-0458">Lysosome</keyword>
<keyword id="KW-0472">Membrane</keyword>
<keyword id="KW-1185">Reference proteome</keyword>
<keyword id="KW-0812">Transmembrane</keyword>
<keyword id="KW-1133">Transmembrane helix</keyword>
<keyword id="KW-0813">Transport</keyword>
<protein>
    <recommendedName>
        <fullName>Major facilitator superfamily domain-containing protein 8</fullName>
    </recommendedName>
</protein>
<accession>Q8BH31</accession>
<accession>Q91VS1</accession>
<accession>Q9CZ06</accession>
<reference key="1">
    <citation type="journal article" date="2005" name="Science">
        <title>The transcriptional landscape of the mammalian genome.</title>
        <authorList>
            <person name="Carninci P."/>
            <person name="Kasukawa T."/>
            <person name="Katayama S."/>
            <person name="Gough J."/>
            <person name="Frith M.C."/>
            <person name="Maeda N."/>
            <person name="Oyama R."/>
            <person name="Ravasi T."/>
            <person name="Lenhard B."/>
            <person name="Wells C."/>
            <person name="Kodzius R."/>
            <person name="Shimokawa K."/>
            <person name="Bajic V.B."/>
            <person name="Brenner S.E."/>
            <person name="Batalov S."/>
            <person name="Forrest A.R."/>
            <person name="Zavolan M."/>
            <person name="Davis M.J."/>
            <person name="Wilming L.G."/>
            <person name="Aidinis V."/>
            <person name="Allen J.E."/>
            <person name="Ambesi-Impiombato A."/>
            <person name="Apweiler R."/>
            <person name="Aturaliya R.N."/>
            <person name="Bailey T.L."/>
            <person name="Bansal M."/>
            <person name="Baxter L."/>
            <person name="Beisel K.W."/>
            <person name="Bersano T."/>
            <person name="Bono H."/>
            <person name="Chalk A.M."/>
            <person name="Chiu K.P."/>
            <person name="Choudhary V."/>
            <person name="Christoffels A."/>
            <person name="Clutterbuck D.R."/>
            <person name="Crowe M.L."/>
            <person name="Dalla E."/>
            <person name="Dalrymple B.P."/>
            <person name="de Bono B."/>
            <person name="Della Gatta G."/>
            <person name="di Bernardo D."/>
            <person name="Down T."/>
            <person name="Engstrom P."/>
            <person name="Fagiolini M."/>
            <person name="Faulkner G."/>
            <person name="Fletcher C.F."/>
            <person name="Fukushima T."/>
            <person name="Furuno M."/>
            <person name="Futaki S."/>
            <person name="Gariboldi M."/>
            <person name="Georgii-Hemming P."/>
            <person name="Gingeras T.R."/>
            <person name="Gojobori T."/>
            <person name="Green R.E."/>
            <person name="Gustincich S."/>
            <person name="Harbers M."/>
            <person name="Hayashi Y."/>
            <person name="Hensch T.K."/>
            <person name="Hirokawa N."/>
            <person name="Hill D."/>
            <person name="Huminiecki L."/>
            <person name="Iacono M."/>
            <person name="Ikeo K."/>
            <person name="Iwama A."/>
            <person name="Ishikawa T."/>
            <person name="Jakt M."/>
            <person name="Kanapin A."/>
            <person name="Katoh M."/>
            <person name="Kawasawa Y."/>
            <person name="Kelso J."/>
            <person name="Kitamura H."/>
            <person name="Kitano H."/>
            <person name="Kollias G."/>
            <person name="Krishnan S.P."/>
            <person name="Kruger A."/>
            <person name="Kummerfeld S.K."/>
            <person name="Kurochkin I.V."/>
            <person name="Lareau L.F."/>
            <person name="Lazarevic D."/>
            <person name="Lipovich L."/>
            <person name="Liu J."/>
            <person name="Liuni S."/>
            <person name="McWilliam S."/>
            <person name="Madan Babu M."/>
            <person name="Madera M."/>
            <person name="Marchionni L."/>
            <person name="Matsuda H."/>
            <person name="Matsuzawa S."/>
            <person name="Miki H."/>
            <person name="Mignone F."/>
            <person name="Miyake S."/>
            <person name="Morris K."/>
            <person name="Mottagui-Tabar S."/>
            <person name="Mulder N."/>
            <person name="Nakano N."/>
            <person name="Nakauchi H."/>
            <person name="Ng P."/>
            <person name="Nilsson R."/>
            <person name="Nishiguchi S."/>
            <person name="Nishikawa S."/>
            <person name="Nori F."/>
            <person name="Ohara O."/>
            <person name="Okazaki Y."/>
            <person name="Orlando V."/>
            <person name="Pang K.C."/>
            <person name="Pavan W.J."/>
            <person name="Pavesi G."/>
            <person name="Pesole G."/>
            <person name="Petrovsky N."/>
            <person name="Piazza S."/>
            <person name="Reed J."/>
            <person name="Reid J.F."/>
            <person name="Ring B.Z."/>
            <person name="Ringwald M."/>
            <person name="Rost B."/>
            <person name="Ruan Y."/>
            <person name="Salzberg S.L."/>
            <person name="Sandelin A."/>
            <person name="Schneider C."/>
            <person name="Schoenbach C."/>
            <person name="Sekiguchi K."/>
            <person name="Semple C.A."/>
            <person name="Seno S."/>
            <person name="Sessa L."/>
            <person name="Sheng Y."/>
            <person name="Shibata Y."/>
            <person name="Shimada H."/>
            <person name="Shimada K."/>
            <person name="Silva D."/>
            <person name="Sinclair B."/>
            <person name="Sperling S."/>
            <person name="Stupka E."/>
            <person name="Sugiura K."/>
            <person name="Sultana R."/>
            <person name="Takenaka Y."/>
            <person name="Taki K."/>
            <person name="Tammoja K."/>
            <person name="Tan S.L."/>
            <person name="Tang S."/>
            <person name="Taylor M.S."/>
            <person name="Tegner J."/>
            <person name="Teichmann S.A."/>
            <person name="Ueda H.R."/>
            <person name="van Nimwegen E."/>
            <person name="Verardo R."/>
            <person name="Wei C.L."/>
            <person name="Yagi K."/>
            <person name="Yamanishi H."/>
            <person name="Zabarovsky E."/>
            <person name="Zhu S."/>
            <person name="Zimmer A."/>
            <person name="Hide W."/>
            <person name="Bult C."/>
            <person name="Grimmond S.M."/>
            <person name="Teasdale R.D."/>
            <person name="Liu E.T."/>
            <person name="Brusic V."/>
            <person name="Quackenbush J."/>
            <person name="Wahlestedt C."/>
            <person name="Mattick J.S."/>
            <person name="Hume D.A."/>
            <person name="Kai C."/>
            <person name="Sasaki D."/>
            <person name="Tomaru Y."/>
            <person name="Fukuda S."/>
            <person name="Kanamori-Katayama M."/>
            <person name="Suzuki M."/>
            <person name="Aoki J."/>
            <person name="Arakawa T."/>
            <person name="Iida J."/>
            <person name="Imamura K."/>
            <person name="Itoh M."/>
            <person name="Kato T."/>
            <person name="Kawaji H."/>
            <person name="Kawagashira N."/>
            <person name="Kawashima T."/>
            <person name="Kojima M."/>
            <person name="Kondo S."/>
            <person name="Konno H."/>
            <person name="Nakano K."/>
            <person name="Ninomiya N."/>
            <person name="Nishio T."/>
            <person name="Okada M."/>
            <person name="Plessy C."/>
            <person name="Shibata K."/>
            <person name="Shiraki T."/>
            <person name="Suzuki S."/>
            <person name="Tagami M."/>
            <person name="Waki K."/>
            <person name="Watahiki A."/>
            <person name="Okamura-Oho Y."/>
            <person name="Suzuki H."/>
            <person name="Kawai J."/>
            <person name="Hayashizaki Y."/>
        </authorList>
    </citation>
    <scope>NUCLEOTIDE SEQUENCE [LARGE SCALE MRNA]</scope>
    <source>
        <strain>C57BL/6J</strain>
        <tissue>Medulla oblongata</tissue>
        <tissue>Testis</tissue>
    </source>
</reference>
<reference key="2">
    <citation type="journal article" date="2004" name="Genome Res.">
        <title>The status, quality, and expansion of the NIH full-length cDNA project: the Mammalian Gene Collection (MGC).</title>
        <authorList>
            <consortium name="The MGC Project Team"/>
        </authorList>
    </citation>
    <scope>NUCLEOTIDE SEQUENCE [LARGE SCALE MRNA] OF 2-519</scope>
</reference>
<reference key="3">
    <citation type="journal article" date="2021" name="Sci. Adv.">
        <title>CLN7 is an organellar chloride channel regulating lysosomal function.</title>
        <authorList>
            <person name="Wang Y."/>
            <person name="Zeng W."/>
            <person name="Lin B."/>
            <person name="Yao Y."/>
            <person name="Li C."/>
            <person name="Hu W."/>
            <person name="Wu H."/>
            <person name="Huang J."/>
            <person name="Zhang M."/>
            <person name="Xue T."/>
            <person name="Ren D."/>
            <person name="Qu L."/>
            <person name="Cang C."/>
        </authorList>
    </citation>
    <scope>FUNCTION</scope>
    <scope>TRANSPORTER ACTIVITY</scope>
    <scope>DISRUPTION PHENOTYPE</scope>
</reference>
<gene>
    <name evidence="1 7" type="primary">Mfsd8</name>
</gene>
<dbReference type="EMBL" id="AK013144">
    <property type="protein sequence ID" value="BAB28676.1"/>
    <property type="molecule type" value="mRNA"/>
</dbReference>
<dbReference type="EMBL" id="AK032080">
    <property type="protein sequence ID" value="BAC27687.1"/>
    <property type="molecule type" value="mRNA"/>
</dbReference>
<dbReference type="EMBL" id="AK077957">
    <property type="protein sequence ID" value="BAC37083.1"/>
    <property type="molecule type" value="mRNA"/>
</dbReference>
<dbReference type="EMBL" id="BC010483">
    <property type="protein sequence ID" value="AAH10483.1"/>
    <property type="molecule type" value="mRNA"/>
</dbReference>
<dbReference type="EMBL" id="BC113183">
    <property type="protein sequence ID" value="AAI13184.1"/>
    <property type="molecule type" value="mRNA"/>
</dbReference>
<dbReference type="EMBL" id="BC113790">
    <property type="protein sequence ID" value="AAI13791.1"/>
    <property type="molecule type" value="mRNA"/>
</dbReference>
<dbReference type="CCDS" id="CCDS17329.1"/>
<dbReference type="RefSeq" id="NP_082416.2">
    <property type="nucleotide sequence ID" value="NM_028140.4"/>
</dbReference>
<dbReference type="SMR" id="Q8BH31"/>
<dbReference type="FunCoup" id="Q8BH31">
    <property type="interactions" value="1978"/>
</dbReference>
<dbReference type="STRING" id="10090.ENSMUSP00000026859"/>
<dbReference type="GlyCosmos" id="Q8BH31">
    <property type="glycosylation" value="2 sites, No reported glycans"/>
</dbReference>
<dbReference type="GlyGen" id="Q8BH31">
    <property type="glycosylation" value="2 sites"/>
</dbReference>
<dbReference type="iPTMnet" id="Q8BH31"/>
<dbReference type="PhosphoSitePlus" id="Q8BH31"/>
<dbReference type="PaxDb" id="10090-ENSMUSP00000026859"/>
<dbReference type="ProteomicsDB" id="292315"/>
<dbReference type="Antibodypedia" id="45354">
    <property type="antibodies" value="58 antibodies from 20 providers"/>
</dbReference>
<dbReference type="DNASU" id="72175"/>
<dbReference type="Ensembl" id="ENSMUST00000026859.11">
    <property type="protein sequence ID" value="ENSMUSP00000026859.6"/>
    <property type="gene ID" value="ENSMUSG00000025759.12"/>
</dbReference>
<dbReference type="GeneID" id="72175"/>
<dbReference type="KEGG" id="mmu:72175"/>
<dbReference type="UCSC" id="uc008pbp.1">
    <property type="organism name" value="mouse"/>
</dbReference>
<dbReference type="AGR" id="MGI:1919425"/>
<dbReference type="CTD" id="256471"/>
<dbReference type="MGI" id="MGI:1919425">
    <property type="gene designation" value="Mfsd8"/>
</dbReference>
<dbReference type="VEuPathDB" id="HostDB:ENSMUSG00000025759"/>
<dbReference type="eggNOG" id="KOG2325">
    <property type="taxonomic scope" value="Eukaryota"/>
</dbReference>
<dbReference type="GeneTree" id="ENSGT00530000063854"/>
<dbReference type="HOGENOM" id="CLU_027024_2_0_1"/>
<dbReference type="InParanoid" id="Q8BH31"/>
<dbReference type="OMA" id="WINVIMG"/>
<dbReference type="OrthoDB" id="370281at2759"/>
<dbReference type="PhylomeDB" id="Q8BH31"/>
<dbReference type="TreeFam" id="TF316590"/>
<dbReference type="BioGRID-ORCS" id="72175">
    <property type="hits" value="3 hits in 78 CRISPR screens"/>
</dbReference>
<dbReference type="ChiTaRS" id="Mfsd8">
    <property type="organism name" value="mouse"/>
</dbReference>
<dbReference type="PRO" id="PR:Q8BH31"/>
<dbReference type="Proteomes" id="UP000000589">
    <property type="component" value="Chromosome 3"/>
</dbReference>
<dbReference type="RNAct" id="Q8BH31">
    <property type="molecule type" value="protein"/>
</dbReference>
<dbReference type="Bgee" id="ENSMUSG00000025759">
    <property type="expression patterns" value="Expressed in white adipose tissue and 66 other cell types or tissues"/>
</dbReference>
<dbReference type="ExpressionAtlas" id="Q8BH31">
    <property type="expression patterns" value="baseline and differential"/>
</dbReference>
<dbReference type="GO" id="GO:0034707">
    <property type="term" value="C:chloride channel complex"/>
    <property type="evidence" value="ECO:0007669"/>
    <property type="project" value="UniProtKB-KW"/>
</dbReference>
<dbReference type="GO" id="GO:0010008">
    <property type="term" value="C:endosome membrane"/>
    <property type="evidence" value="ECO:0000250"/>
    <property type="project" value="UniProtKB"/>
</dbReference>
<dbReference type="GO" id="GO:0005765">
    <property type="term" value="C:lysosomal membrane"/>
    <property type="evidence" value="ECO:0000250"/>
    <property type="project" value="UniProtKB"/>
</dbReference>
<dbReference type="GO" id="GO:0005764">
    <property type="term" value="C:lysosome"/>
    <property type="evidence" value="ECO:0000314"/>
    <property type="project" value="MGI"/>
</dbReference>
<dbReference type="GO" id="GO:0016020">
    <property type="term" value="C:membrane"/>
    <property type="evidence" value="ECO:0000314"/>
    <property type="project" value="MGI"/>
</dbReference>
<dbReference type="GO" id="GO:0005739">
    <property type="term" value="C:mitochondrion"/>
    <property type="evidence" value="ECO:0000315"/>
    <property type="project" value="MGI"/>
</dbReference>
<dbReference type="GO" id="GO:0005254">
    <property type="term" value="F:chloride channel activity"/>
    <property type="evidence" value="ECO:0000315"/>
    <property type="project" value="UniProtKB"/>
</dbReference>
<dbReference type="GO" id="GO:0062054">
    <property type="term" value="F:fluoride channel activity"/>
    <property type="evidence" value="ECO:0000250"/>
    <property type="project" value="UniProtKB"/>
</dbReference>
<dbReference type="GO" id="GO:0015111">
    <property type="term" value="F:iodide transmembrane transporter activity"/>
    <property type="evidence" value="ECO:0007669"/>
    <property type="project" value="Ensembl"/>
</dbReference>
<dbReference type="GO" id="GO:0006915">
    <property type="term" value="P:apoptotic process"/>
    <property type="evidence" value="ECO:0000315"/>
    <property type="project" value="MGI"/>
</dbReference>
<dbReference type="GO" id="GO:0048708">
    <property type="term" value="P:astrocyte differentiation"/>
    <property type="evidence" value="ECO:0000315"/>
    <property type="project" value="MGI"/>
</dbReference>
<dbReference type="GO" id="GO:0097352">
    <property type="term" value="P:autophagosome maturation"/>
    <property type="evidence" value="ECO:0000315"/>
    <property type="project" value="MGI"/>
</dbReference>
<dbReference type="GO" id="GO:0006914">
    <property type="term" value="P:autophagy"/>
    <property type="evidence" value="ECO:0000315"/>
    <property type="project" value="MGI"/>
</dbReference>
<dbReference type="GO" id="GO:0045333">
    <property type="term" value="P:cellular respiration"/>
    <property type="evidence" value="ECO:0000315"/>
    <property type="project" value="MGI"/>
</dbReference>
<dbReference type="GO" id="GO:0008340">
    <property type="term" value="P:determination of adult lifespan"/>
    <property type="evidence" value="ECO:0000314"/>
    <property type="project" value="MGI"/>
</dbReference>
<dbReference type="GO" id="GO:0010467">
    <property type="term" value="P:gene expression"/>
    <property type="evidence" value="ECO:0000314"/>
    <property type="project" value="MGI"/>
</dbReference>
<dbReference type="GO" id="GO:0042063">
    <property type="term" value="P:gliogenesis"/>
    <property type="evidence" value="ECO:0000315"/>
    <property type="project" value="MGI"/>
</dbReference>
<dbReference type="GO" id="GO:0006664">
    <property type="term" value="P:glycolipid metabolic process"/>
    <property type="evidence" value="ECO:0000315"/>
    <property type="project" value="MGI"/>
</dbReference>
<dbReference type="GO" id="GO:0006096">
    <property type="term" value="P:glycolytic process"/>
    <property type="evidence" value="ECO:0000315"/>
    <property type="project" value="MGI"/>
</dbReference>
<dbReference type="GO" id="GO:0009100">
    <property type="term" value="P:glycoprotein metabolic process"/>
    <property type="evidence" value="ECO:0000315"/>
    <property type="project" value="MGI"/>
</dbReference>
<dbReference type="GO" id="GO:0070841">
    <property type="term" value="P:inclusion body assembly"/>
    <property type="evidence" value="ECO:0000315"/>
    <property type="project" value="MGI"/>
</dbReference>
<dbReference type="GO" id="GO:1905146">
    <property type="term" value="P:lysosomal protein catabolic process"/>
    <property type="evidence" value="ECO:0000315"/>
    <property type="project" value="MGI"/>
</dbReference>
<dbReference type="GO" id="GO:0007040">
    <property type="term" value="P:lysosome organization"/>
    <property type="evidence" value="ECO:0000314"/>
    <property type="project" value="MGI"/>
</dbReference>
<dbReference type="GO" id="GO:0051235">
    <property type="term" value="P:maintenance of location"/>
    <property type="evidence" value="ECO:0000315"/>
    <property type="project" value="MGI"/>
</dbReference>
<dbReference type="GO" id="GO:0014004">
    <property type="term" value="P:microglia differentiation"/>
    <property type="evidence" value="ECO:0000315"/>
    <property type="project" value="MGI"/>
</dbReference>
<dbReference type="GO" id="GO:0007005">
    <property type="term" value="P:mitochondrion organization"/>
    <property type="evidence" value="ECO:0000315"/>
    <property type="project" value="MGI"/>
</dbReference>
<dbReference type="GO" id="GO:0061744">
    <property type="term" value="P:motor behavior"/>
    <property type="evidence" value="ECO:0000314"/>
    <property type="project" value="MGI"/>
</dbReference>
<dbReference type="GO" id="GO:0035264">
    <property type="term" value="P:multicellular organism growth"/>
    <property type="evidence" value="ECO:0000314"/>
    <property type="project" value="MGI"/>
</dbReference>
<dbReference type="GO" id="GO:0043524">
    <property type="term" value="P:negative regulation of neuron apoptotic process"/>
    <property type="evidence" value="ECO:0000315"/>
    <property type="project" value="MGI"/>
</dbReference>
<dbReference type="GO" id="GO:0050905">
    <property type="term" value="P:neuromuscular process"/>
    <property type="evidence" value="ECO:0000314"/>
    <property type="project" value="MGI"/>
</dbReference>
<dbReference type="GO" id="GO:0051402">
    <property type="term" value="P:neuron apoptotic process"/>
    <property type="evidence" value="ECO:0000315"/>
    <property type="project" value="MGI"/>
</dbReference>
<dbReference type="GO" id="GO:0048666">
    <property type="term" value="P:neuron development"/>
    <property type="evidence" value="ECO:0000315"/>
    <property type="project" value="MGI"/>
</dbReference>
<dbReference type="GO" id="GO:0050821">
    <property type="term" value="P:protein stabilization"/>
    <property type="evidence" value="ECO:0000315"/>
    <property type="project" value="MGI"/>
</dbReference>
<dbReference type="GO" id="GO:0072593">
    <property type="term" value="P:reactive oxygen species metabolic process"/>
    <property type="evidence" value="ECO:0000315"/>
    <property type="project" value="MGI"/>
</dbReference>
<dbReference type="GO" id="GO:0010506">
    <property type="term" value="P:regulation of autophagy"/>
    <property type="evidence" value="ECO:0000315"/>
    <property type="project" value="MGI"/>
</dbReference>
<dbReference type="GO" id="GO:1905165">
    <property type="term" value="P:regulation of lysosomal protein catabolic process"/>
    <property type="evidence" value="ECO:0000315"/>
    <property type="project" value="MGI"/>
</dbReference>
<dbReference type="GO" id="GO:0060041">
    <property type="term" value="P:retina development in camera-type eye"/>
    <property type="evidence" value="ECO:0000315"/>
    <property type="project" value="MGI"/>
</dbReference>
<dbReference type="GO" id="GO:0038202">
    <property type="term" value="P:TORC1 signaling"/>
    <property type="evidence" value="ECO:0000315"/>
    <property type="project" value="MGI"/>
</dbReference>
<dbReference type="CDD" id="cd17326">
    <property type="entry name" value="MFS_MFSD8"/>
    <property type="match status" value="1"/>
</dbReference>
<dbReference type="Gene3D" id="1.20.1250.20">
    <property type="entry name" value="MFS general substrate transporter like domains"/>
    <property type="match status" value="1"/>
</dbReference>
<dbReference type="InterPro" id="IPR011701">
    <property type="entry name" value="MFS"/>
</dbReference>
<dbReference type="InterPro" id="IPR020846">
    <property type="entry name" value="MFS_dom"/>
</dbReference>
<dbReference type="InterPro" id="IPR051068">
    <property type="entry name" value="MFS_Domain-Containing_Protein"/>
</dbReference>
<dbReference type="InterPro" id="IPR036259">
    <property type="entry name" value="MFS_trans_sf"/>
</dbReference>
<dbReference type="PANTHER" id="PTHR23510">
    <property type="entry name" value="INNER MEMBRANE TRANSPORT PROTEIN YAJR"/>
    <property type="match status" value="1"/>
</dbReference>
<dbReference type="PANTHER" id="PTHR23510:SF3">
    <property type="entry name" value="MAJOR FACILITATOR SUPERFAMILY DOMAIN-CONTAINING PROTEIN 8"/>
    <property type="match status" value="1"/>
</dbReference>
<dbReference type="Pfam" id="PF07690">
    <property type="entry name" value="MFS_1"/>
    <property type="match status" value="1"/>
</dbReference>
<dbReference type="SUPFAM" id="SSF103473">
    <property type="entry name" value="MFS general substrate transporter"/>
    <property type="match status" value="1"/>
</dbReference>
<dbReference type="PROSITE" id="PS50850">
    <property type="entry name" value="MFS"/>
    <property type="match status" value="1"/>
</dbReference>
<evidence type="ECO:0000250" key="1">
    <source>
        <dbReference type="UniProtKB" id="Q8NHS3"/>
    </source>
</evidence>
<evidence type="ECO:0000255" key="2"/>
<evidence type="ECO:0000256" key="3">
    <source>
        <dbReference type="SAM" id="MobiDB-lite"/>
    </source>
</evidence>
<evidence type="ECO:0000269" key="4">
    <source>
    </source>
</evidence>
<evidence type="ECO:0000305" key="5"/>
<evidence type="ECO:0000305" key="6">
    <source>
    </source>
</evidence>
<evidence type="ECO:0000312" key="7">
    <source>
        <dbReference type="MGI" id="MGI:1919425"/>
    </source>
</evidence>